<feature type="chain" id="PRO_0000184347" description="Ribosomal RNA small subunit methyltransferase G">
    <location>
        <begin position="1"/>
        <end position="237"/>
    </location>
</feature>
<feature type="binding site" evidence="1">
    <location>
        <position position="78"/>
    </location>
    <ligand>
        <name>S-adenosyl-L-methionine</name>
        <dbReference type="ChEBI" id="CHEBI:59789"/>
    </ligand>
</feature>
<feature type="binding site" evidence="1">
    <location>
        <position position="83"/>
    </location>
    <ligand>
        <name>S-adenosyl-L-methionine</name>
        <dbReference type="ChEBI" id="CHEBI:59789"/>
    </ligand>
</feature>
<feature type="binding site" evidence="1">
    <location>
        <begin position="129"/>
        <end position="130"/>
    </location>
    <ligand>
        <name>S-adenosyl-L-methionine</name>
        <dbReference type="ChEBI" id="CHEBI:59789"/>
    </ligand>
</feature>
<feature type="binding site" evidence="1">
    <location>
        <position position="148"/>
    </location>
    <ligand>
        <name>S-adenosyl-L-methionine</name>
        <dbReference type="ChEBI" id="CHEBI:59789"/>
    </ligand>
</feature>
<protein>
    <recommendedName>
        <fullName evidence="1">Ribosomal RNA small subunit methyltransferase G</fullName>
        <ecNumber evidence="1">2.1.1.-</ecNumber>
    </recommendedName>
    <alternativeName>
        <fullName evidence="1">16S rRNA 7-methylguanosine methyltransferase</fullName>
        <shortName evidence="1">16S rRNA m7G methyltransferase</shortName>
    </alternativeName>
</protein>
<comment type="function">
    <text evidence="1">Specifically methylates the N7 position of a guanine in 16S rRNA.</text>
</comment>
<comment type="subcellular location">
    <subcellularLocation>
        <location evidence="1">Cytoplasm</location>
    </subcellularLocation>
</comment>
<comment type="similarity">
    <text evidence="1">Belongs to the methyltransferase superfamily. RNA methyltransferase RsmG family.</text>
</comment>
<sequence>MTPEDFYMALKELGFDLSQKQKDQFQRYFELLVEWNEKINLTAITDKDEVFLKHFYDSLAPVLQGHIKNQSIQLLDIGAGAGFPSLPIKILCPNLDVTIIDSLNKRITFLNFLSDELGLSGVHFYHGRAEDFGQDKAFRAQFDIVTARAVARMQVLSELTIPFLKVGGQLIALKAAAADQELVDARNALNVLFAKPILNENYKLPNGDGRNITIIDKKKETPNKYPRRAGIPNKKPL</sequence>
<keyword id="KW-0963">Cytoplasm</keyword>
<keyword id="KW-0489">Methyltransferase</keyword>
<keyword id="KW-0698">rRNA processing</keyword>
<keyword id="KW-0949">S-adenosyl-L-methionine</keyword>
<keyword id="KW-0808">Transferase</keyword>
<accession>Q5M1E6</accession>
<organism>
    <name type="scientific">Streptococcus thermophilus (strain CNRZ 1066)</name>
    <dbReference type="NCBI Taxonomy" id="299768"/>
    <lineage>
        <taxon>Bacteria</taxon>
        <taxon>Bacillati</taxon>
        <taxon>Bacillota</taxon>
        <taxon>Bacilli</taxon>
        <taxon>Lactobacillales</taxon>
        <taxon>Streptococcaceae</taxon>
        <taxon>Streptococcus</taxon>
    </lineage>
</organism>
<dbReference type="EC" id="2.1.1.-" evidence="1"/>
<dbReference type="EMBL" id="CP000024">
    <property type="protein sequence ID" value="AAV61918.1"/>
    <property type="molecule type" value="Genomic_DNA"/>
</dbReference>
<dbReference type="RefSeq" id="WP_002946490.1">
    <property type="nucleotide sequence ID" value="NC_006449.1"/>
</dbReference>
<dbReference type="SMR" id="Q5M1E6"/>
<dbReference type="GeneID" id="66898235"/>
<dbReference type="KEGG" id="stc:str0315"/>
<dbReference type="HOGENOM" id="CLU_065341_0_2_9"/>
<dbReference type="GO" id="GO:0005829">
    <property type="term" value="C:cytosol"/>
    <property type="evidence" value="ECO:0007669"/>
    <property type="project" value="TreeGrafter"/>
</dbReference>
<dbReference type="GO" id="GO:0070043">
    <property type="term" value="F:rRNA (guanine-N7-)-methyltransferase activity"/>
    <property type="evidence" value="ECO:0007669"/>
    <property type="project" value="UniProtKB-UniRule"/>
</dbReference>
<dbReference type="CDD" id="cd02440">
    <property type="entry name" value="AdoMet_MTases"/>
    <property type="match status" value="1"/>
</dbReference>
<dbReference type="FunFam" id="3.40.50.150:FF:000041">
    <property type="entry name" value="Ribosomal RNA small subunit methyltransferase G"/>
    <property type="match status" value="1"/>
</dbReference>
<dbReference type="Gene3D" id="3.40.50.150">
    <property type="entry name" value="Vaccinia Virus protein VP39"/>
    <property type="match status" value="1"/>
</dbReference>
<dbReference type="HAMAP" id="MF_00074">
    <property type="entry name" value="16SrRNA_methyltr_G"/>
    <property type="match status" value="1"/>
</dbReference>
<dbReference type="InterPro" id="IPR003682">
    <property type="entry name" value="rRNA_ssu_MeTfrase_G"/>
</dbReference>
<dbReference type="InterPro" id="IPR029063">
    <property type="entry name" value="SAM-dependent_MTases_sf"/>
</dbReference>
<dbReference type="NCBIfam" id="TIGR00138">
    <property type="entry name" value="rsmG_gidB"/>
    <property type="match status" value="1"/>
</dbReference>
<dbReference type="PANTHER" id="PTHR31760">
    <property type="entry name" value="S-ADENOSYL-L-METHIONINE-DEPENDENT METHYLTRANSFERASES SUPERFAMILY PROTEIN"/>
    <property type="match status" value="1"/>
</dbReference>
<dbReference type="PANTHER" id="PTHR31760:SF0">
    <property type="entry name" value="S-ADENOSYL-L-METHIONINE-DEPENDENT METHYLTRANSFERASES SUPERFAMILY PROTEIN"/>
    <property type="match status" value="1"/>
</dbReference>
<dbReference type="Pfam" id="PF02527">
    <property type="entry name" value="GidB"/>
    <property type="match status" value="1"/>
</dbReference>
<dbReference type="SUPFAM" id="SSF53335">
    <property type="entry name" value="S-adenosyl-L-methionine-dependent methyltransferases"/>
    <property type="match status" value="1"/>
</dbReference>
<proteinExistence type="inferred from homology"/>
<reference key="1">
    <citation type="journal article" date="2004" name="Nat. Biotechnol.">
        <title>Complete sequence and comparative genome analysis of the dairy bacterium Streptococcus thermophilus.</title>
        <authorList>
            <person name="Bolotin A."/>
            <person name="Quinquis B."/>
            <person name="Renault P."/>
            <person name="Sorokin A."/>
            <person name="Ehrlich S.D."/>
            <person name="Kulakauskas S."/>
            <person name="Lapidus A."/>
            <person name="Goltsman E."/>
            <person name="Mazur M."/>
            <person name="Pusch G.D."/>
            <person name="Fonstein M."/>
            <person name="Overbeek R."/>
            <person name="Kyprides N."/>
            <person name="Purnelle B."/>
            <person name="Prozzi D."/>
            <person name="Ngui K."/>
            <person name="Masuy D."/>
            <person name="Hancy F."/>
            <person name="Burteau S."/>
            <person name="Boutry M."/>
            <person name="Delcour J."/>
            <person name="Goffeau A."/>
            <person name="Hols P."/>
        </authorList>
    </citation>
    <scope>NUCLEOTIDE SEQUENCE [LARGE SCALE GENOMIC DNA]</scope>
    <source>
        <strain>CNRZ 1066</strain>
    </source>
</reference>
<gene>
    <name evidence="1" type="primary">rsmG</name>
    <name type="ordered locus">str0315</name>
</gene>
<evidence type="ECO:0000255" key="1">
    <source>
        <dbReference type="HAMAP-Rule" id="MF_00074"/>
    </source>
</evidence>
<name>RSMG_STRT1</name>